<keyword id="KW-0002">3D-structure</keyword>
<keyword id="KW-0025">Alternative splicing</keyword>
<keyword id="KW-1015">Disulfide bond</keyword>
<keyword id="KW-0325">Glycoprotein</keyword>
<keyword id="KW-0378">Hydrolase</keyword>
<keyword id="KW-0442">Lipid degradation</keyword>
<keyword id="KW-0443">Lipid metabolism</keyword>
<keyword id="KW-0458">Lysosome</keyword>
<keyword id="KW-1185">Reference proteome</keyword>
<keyword id="KW-0732">Signal</keyword>
<accession>Q3TCN2</accession>
<accession>Q3TD43</accession>
<accession>Q3TPP8</accession>
<accession>Q8BHG8</accession>
<accession>Q8BMB6</accession>
<accession>Q8BXI3</accession>
<accession>Q8C0M4</accession>
<accession>Q8R0V3</accession>
<accession>Q9DBG4</accession>
<accession>Q9EQI9</accession>
<name>PLBL2_MOUSE</name>
<organism>
    <name type="scientific">Mus musculus</name>
    <name type="common">Mouse</name>
    <dbReference type="NCBI Taxonomy" id="10090"/>
    <lineage>
        <taxon>Eukaryota</taxon>
        <taxon>Metazoa</taxon>
        <taxon>Chordata</taxon>
        <taxon>Craniata</taxon>
        <taxon>Vertebrata</taxon>
        <taxon>Euteleostomi</taxon>
        <taxon>Mammalia</taxon>
        <taxon>Eutheria</taxon>
        <taxon>Euarchontoglires</taxon>
        <taxon>Glires</taxon>
        <taxon>Rodentia</taxon>
        <taxon>Myomorpha</taxon>
        <taxon>Muroidea</taxon>
        <taxon>Muridae</taxon>
        <taxon>Murinae</taxon>
        <taxon>Mus</taxon>
        <taxon>Mus</taxon>
    </lineage>
</organism>
<reference key="1">
    <citation type="journal article" date="2002" name="Proc. Natl. Acad. Sci. U.S.A.">
        <title>Positional cloning of the murine flavivirus resistance gene.</title>
        <authorList>
            <person name="Perelygin A.A."/>
            <person name="Scherbik S.V."/>
            <person name="Zhulin I.B."/>
            <person name="Stockman B.M."/>
            <person name="Li Y."/>
            <person name="Brinton M.A."/>
        </authorList>
    </citation>
    <scope>NUCLEOTIDE SEQUENCE [MRNA] (ISOFORM 1)</scope>
    <source>
        <strain>C3H/RV</strain>
    </source>
</reference>
<reference key="2">
    <citation type="journal article" date="2005" name="Science">
        <title>The transcriptional landscape of the mammalian genome.</title>
        <authorList>
            <person name="Carninci P."/>
            <person name="Kasukawa T."/>
            <person name="Katayama S."/>
            <person name="Gough J."/>
            <person name="Frith M.C."/>
            <person name="Maeda N."/>
            <person name="Oyama R."/>
            <person name="Ravasi T."/>
            <person name="Lenhard B."/>
            <person name="Wells C."/>
            <person name="Kodzius R."/>
            <person name="Shimokawa K."/>
            <person name="Bajic V.B."/>
            <person name="Brenner S.E."/>
            <person name="Batalov S."/>
            <person name="Forrest A.R."/>
            <person name="Zavolan M."/>
            <person name="Davis M.J."/>
            <person name="Wilming L.G."/>
            <person name="Aidinis V."/>
            <person name="Allen J.E."/>
            <person name="Ambesi-Impiombato A."/>
            <person name="Apweiler R."/>
            <person name="Aturaliya R.N."/>
            <person name="Bailey T.L."/>
            <person name="Bansal M."/>
            <person name="Baxter L."/>
            <person name="Beisel K.W."/>
            <person name="Bersano T."/>
            <person name="Bono H."/>
            <person name="Chalk A.M."/>
            <person name="Chiu K.P."/>
            <person name="Choudhary V."/>
            <person name="Christoffels A."/>
            <person name="Clutterbuck D.R."/>
            <person name="Crowe M.L."/>
            <person name="Dalla E."/>
            <person name="Dalrymple B.P."/>
            <person name="de Bono B."/>
            <person name="Della Gatta G."/>
            <person name="di Bernardo D."/>
            <person name="Down T."/>
            <person name="Engstrom P."/>
            <person name="Fagiolini M."/>
            <person name="Faulkner G."/>
            <person name="Fletcher C.F."/>
            <person name="Fukushima T."/>
            <person name="Furuno M."/>
            <person name="Futaki S."/>
            <person name="Gariboldi M."/>
            <person name="Georgii-Hemming P."/>
            <person name="Gingeras T.R."/>
            <person name="Gojobori T."/>
            <person name="Green R.E."/>
            <person name="Gustincich S."/>
            <person name="Harbers M."/>
            <person name="Hayashi Y."/>
            <person name="Hensch T.K."/>
            <person name="Hirokawa N."/>
            <person name="Hill D."/>
            <person name="Huminiecki L."/>
            <person name="Iacono M."/>
            <person name="Ikeo K."/>
            <person name="Iwama A."/>
            <person name="Ishikawa T."/>
            <person name="Jakt M."/>
            <person name="Kanapin A."/>
            <person name="Katoh M."/>
            <person name="Kawasawa Y."/>
            <person name="Kelso J."/>
            <person name="Kitamura H."/>
            <person name="Kitano H."/>
            <person name="Kollias G."/>
            <person name="Krishnan S.P."/>
            <person name="Kruger A."/>
            <person name="Kummerfeld S.K."/>
            <person name="Kurochkin I.V."/>
            <person name="Lareau L.F."/>
            <person name="Lazarevic D."/>
            <person name="Lipovich L."/>
            <person name="Liu J."/>
            <person name="Liuni S."/>
            <person name="McWilliam S."/>
            <person name="Madan Babu M."/>
            <person name="Madera M."/>
            <person name="Marchionni L."/>
            <person name="Matsuda H."/>
            <person name="Matsuzawa S."/>
            <person name="Miki H."/>
            <person name="Mignone F."/>
            <person name="Miyake S."/>
            <person name="Morris K."/>
            <person name="Mottagui-Tabar S."/>
            <person name="Mulder N."/>
            <person name="Nakano N."/>
            <person name="Nakauchi H."/>
            <person name="Ng P."/>
            <person name="Nilsson R."/>
            <person name="Nishiguchi S."/>
            <person name="Nishikawa S."/>
            <person name="Nori F."/>
            <person name="Ohara O."/>
            <person name="Okazaki Y."/>
            <person name="Orlando V."/>
            <person name="Pang K.C."/>
            <person name="Pavan W.J."/>
            <person name="Pavesi G."/>
            <person name="Pesole G."/>
            <person name="Petrovsky N."/>
            <person name="Piazza S."/>
            <person name="Reed J."/>
            <person name="Reid J.F."/>
            <person name="Ring B.Z."/>
            <person name="Ringwald M."/>
            <person name="Rost B."/>
            <person name="Ruan Y."/>
            <person name="Salzberg S.L."/>
            <person name="Sandelin A."/>
            <person name="Schneider C."/>
            <person name="Schoenbach C."/>
            <person name="Sekiguchi K."/>
            <person name="Semple C.A."/>
            <person name="Seno S."/>
            <person name="Sessa L."/>
            <person name="Sheng Y."/>
            <person name="Shibata Y."/>
            <person name="Shimada H."/>
            <person name="Shimada K."/>
            <person name="Silva D."/>
            <person name="Sinclair B."/>
            <person name="Sperling S."/>
            <person name="Stupka E."/>
            <person name="Sugiura K."/>
            <person name="Sultana R."/>
            <person name="Takenaka Y."/>
            <person name="Taki K."/>
            <person name="Tammoja K."/>
            <person name="Tan S.L."/>
            <person name="Tang S."/>
            <person name="Taylor M.S."/>
            <person name="Tegner J."/>
            <person name="Teichmann S.A."/>
            <person name="Ueda H.R."/>
            <person name="van Nimwegen E."/>
            <person name="Verardo R."/>
            <person name="Wei C.L."/>
            <person name="Yagi K."/>
            <person name="Yamanishi H."/>
            <person name="Zabarovsky E."/>
            <person name="Zhu S."/>
            <person name="Zimmer A."/>
            <person name="Hide W."/>
            <person name="Bult C."/>
            <person name="Grimmond S.M."/>
            <person name="Teasdale R.D."/>
            <person name="Liu E.T."/>
            <person name="Brusic V."/>
            <person name="Quackenbush J."/>
            <person name="Wahlestedt C."/>
            <person name="Mattick J.S."/>
            <person name="Hume D.A."/>
            <person name="Kai C."/>
            <person name="Sasaki D."/>
            <person name="Tomaru Y."/>
            <person name="Fukuda S."/>
            <person name="Kanamori-Katayama M."/>
            <person name="Suzuki M."/>
            <person name="Aoki J."/>
            <person name="Arakawa T."/>
            <person name="Iida J."/>
            <person name="Imamura K."/>
            <person name="Itoh M."/>
            <person name="Kato T."/>
            <person name="Kawaji H."/>
            <person name="Kawagashira N."/>
            <person name="Kawashima T."/>
            <person name="Kojima M."/>
            <person name="Kondo S."/>
            <person name="Konno H."/>
            <person name="Nakano K."/>
            <person name="Ninomiya N."/>
            <person name="Nishio T."/>
            <person name="Okada M."/>
            <person name="Plessy C."/>
            <person name="Shibata K."/>
            <person name="Shiraki T."/>
            <person name="Suzuki S."/>
            <person name="Tagami M."/>
            <person name="Waki K."/>
            <person name="Watahiki A."/>
            <person name="Okamura-Oho Y."/>
            <person name="Suzuki H."/>
            <person name="Kawai J."/>
            <person name="Hayashizaki Y."/>
        </authorList>
    </citation>
    <scope>NUCLEOTIDE SEQUENCE [LARGE SCALE MRNA] (ISOFORMS 1 AND 2)</scope>
    <source>
        <strain>C57BL/6J</strain>
        <strain>NOD</strain>
        <tissue>Brain cortex</tissue>
        <tissue>Cerebellum</tissue>
        <tissue>Liver</tissue>
        <tissue>Testis</tissue>
        <tissue>Thymus</tissue>
        <tissue>Wolffian duct</tissue>
    </source>
</reference>
<reference key="3">
    <citation type="journal article" date="2004" name="Genome Res.">
        <title>The status, quality, and expansion of the NIH full-length cDNA project: the Mammalian Gene Collection (MGC).</title>
        <authorList>
            <consortium name="The MGC Project Team"/>
        </authorList>
    </citation>
    <scope>NUCLEOTIDE SEQUENCE [LARGE SCALE MRNA] (ISOFORM 1)</scope>
    <source>
        <strain>FVB/N</strain>
        <tissue>Liver</tissue>
        <tissue>Salivary gland</tissue>
    </source>
</reference>
<reference key="4">
    <citation type="journal article" date="2006" name="FEBS Lett.">
        <title>Molecular characterization of the hypothetical 66.3-kDa protein in mouse: lysosomal targeting, glycosylation, processing and tissue distribution.</title>
        <authorList>
            <person name="Deuschl F."/>
            <person name="Kollmann K."/>
            <person name="von Figura K."/>
            <person name="Luebke T."/>
        </authorList>
    </citation>
    <scope>GLYCOSYLATION AT ASN-93; ASN-115; ASN-236; ASN-441 AND ASN-520</scope>
    <scope>SUBCELLULAR LOCATION</scope>
    <scope>PROCESSING</scope>
    <scope>TISSUE SPECIFICITY</scope>
    <scope>IDENTIFICATION BY MASS SPECTROMETRY</scope>
</reference>
<reference key="5">
    <citation type="journal article" date="2007" name="Biochem. J.">
        <title>Biochemical characterization and lysosomal localization of the mannose-6-phosphate protein p76 (hypothetical protein LOC196463).</title>
        <authorList>
            <person name="Jensen A.G."/>
            <person name="Chemali M."/>
            <person name="Chapel A."/>
            <person name="Kieffer-Jaquinod S."/>
            <person name="Jadot M."/>
            <person name="Garin J."/>
            <person name="Journet A."/>
        </authorList>
    </citation>
    <scope>SUBCELLULAR LOCATION</scope>
    <scope>PROCESSING</scope>
</reference>
<reference key="6">
    <citation type="journal article" date="2010" name="Cell">
        <title>A tissue-specific atlas of mouse protein phosphorylation and expression.</title>
        <authorList>
            <person name="Huttlin E.L."/>
            <person name="Jedrychowski M.P."/>
            <person name="Elias J.E."/>
            <person name="Goswami T."/>
            <person name="Rad R."/>
            <person name="Beausoleil S.A."/>
            <person name="Villen J."/>
            <person name="Haas W."/>
            <person name="Sowa M.E."/>
            <person name="Gygi S.P."/>
        </authorList>
    </citation>
    <scope>IDENTIFICATION BY MASS SPECTROMETRY [LARGE SCALE ANALYSIS]</scope>
    <source>
        <tissue>Brain</tissue>
        <tissue>Heart</tissue>
        <tissue>Kidney</tissue>
        <tissue>Liver</tissue>
        <tissue>Lung</tissue>
        <tissue>Pancreas</tissue>
        <tissue>Spleen</tissue>
        <tissue>Testis</tissue>
    </source>
</reference>
<reference key="7">
    <citation type="journal article" date="2009" name="Acta Crystallogr. D">
        <title>De novo sulfur SAD phasing of the lysosomal 66.3 kDa protein from mouse.</title>
        <authorList>
            <person name="Lakomek K."/>
            <person name="Dickmanns A."/>
            <person name="Mueller U."/>
            <person name="Kollmann K."/>
            <person name="Deuschl F."/>
            <person name="Berndt A."/>
            <person name="Lubke T."/>
            <person name="Ficner R."/>
        </authorList>
    </citation>
    <scope>X-RAY CRYSTALLOGRAPHY (2.4 ANGSTROMS) OF 47-594</scope>
    <scope>GLYCOSYLATION AT ASN-115; ASN-236; ASN-441 AND ASN-520</scope>
    <scope>DISULFIDE BONDS</scope>
</reference>
<gene>
    <name type="primary">Plbd2</name>
</gene>
<sequence>MAAPVDGSSGGWAARALRRALALTSLTTLALLASLTGLLLSGPAGALPTLGPGWQRQNPDPPVSRTRSLLLDAASGQLRLEDGFHPDAVAWANLTNAIRETGWAYLDLSTNGRYNDSLQAYAAGVVEASVSEELIYMHWMNTVVNYCGPFEYEVGYCEKLKNFLEANLEWMQREMELNPDSPYWHQVRLTLLQLKGLEDSYEGRLTFPTGRFTIKPLGFLLLQISGDLEDLEPALNKTNTKPSLGSGSCSALIKLLPGGHDLLVAHNTWNSYQNMLRIIKKYRLQFREGPQEEYPLVAGNNLVFSSYPGTIFSGDDFYILGSGLVTLETTIGNKNPALWKYVQPQGCVLEWIRNVVANRLALDGATWADVFKRFNSGTYNNQWMIVDYKAFLPNGPSPGSRVLTILEQIPGMVVVADKTAELYKTTYWASYNIPYFETVFNASGLQALVAQYGDWFSYTKNPRAKIFQRDQSLVEDMDAMVRLMRYNDFLHDPLSLCEACNPKPNAENAISARSDLNPANGSYPFQALHQRAHGGIDVKVTSFTLAKYMSMLAASGPTWDQCPPFQWSKSPFHSMLHMGQPDLWMFSPIRVPWD</sequence>
<dbReference type="EC" id="3.1.1.-"/>
<dbReference type="EMBL" id="AF217003">
    <property type="protein sequence ID" value="AAG44101.1"/>
    <property type="molecule type" value="mRNA"/>
</dbReference>
<dbReference type="EMBL" id="AK004973">
    <property type="protein sequence ID" value="BAB23709.1"/>
    <property type="molecule type" value="mRNA"/>
</dbReference>
<dbReference type="EMBL" id="AK030234">
    <property type="protein sequence ID" value="BAC26858.1"/>
    <property type="molecule type" value="mRNA"/>
</dbReference>
<dbReference type="EMBL" id="AK032930">
    <property type="protein sequence ID" value="BAC28089.1"/>
    <property type="molecule type" value="mRNA"/>
</dbReference>
<dbReference type="EMBL" id="AK042089">
    <property type="protein sequence ID" value="BAC31160.1"/>
    <property type="molecule type" value="mRNA"/>
</dbReference>
<dbReference type="EMBL" id="AK043608">
    <property type="protein sequence ID" value="BAC31595.1"/>
    <property type="molecule type" value="mRNA"/>
</dbReference>
<dbReference type="EMBL" id="AK046937">
    <property type="protein sequence ID" value="BAC32923.1"/>
    <property type="molecule type" value="mRNA"/>
</dbReference>
<dbReference type="EMBL" id="AK164220">
    <property type="protein sequence ID" value="BAE37687.1"/>
    <property type="molecule type" value="mRNA"/>
</dbReference>
<dbReference type="EMBL" id="AK170387">
    <property type="protein sequence ID" value="BAE41761.1"/>
    <property type="molecule type" value="mRNA"/>
</dbReference>
<dbReference type="EMBL" id="AK170631">
    <property type="protein sequence ID" value="BAE41924.1"/>
    <property type="molecule type" value="mRNA"/>
</dbReference>
<dbReference type="EMBL" id="BC026395">
    <property type="protein sequence ID" value="AAH26395.1"/>
    <property type="status" value="ALT_INIT"/>
    <property type="molecule type" value="mRNA"/>
</dbReference>
<dbReference type="EMBL" id="BC038605">
    <property type="protein sequence ID" value="AAH38605.1"/>
    <property type="molecule type" value="mRNA"/>
</dbReference>
<dbReference type="EMBL" id="BC048826">
    <property type="protein sequence ID" value="AAH48826.1"/>
    <property type="molecule type" value="mRNA"/>
</dbReference>
<dbReference type="CCDS" id="CCDS19620.1">
    <molecule id="Q3TCN2-1"/>
</dbReference>
<dbReference type="RefSeq" id="NP_076114.2">
    <molecule id="Q3TCN2-1"/>
    <property type="nucleotide sequence ID" value="NM_023625.4"/>
</dbReference>
<dbReference type="PDB" id="3FBX">
    <property type="method" value="X-ray"/>
    <property type="resolution" value="2.40 A"/>
    <property type="chains" value="A=47-594"/>
</dbReference>
<dbReference type="PDB" id="3FGR">
    <property type="method" value="X-ray"/>
    <property type="resolution" value="1.80 A"/>
    <property type="chains" value="A=47-248, B=249-594"/>
</dbReference>
<dbReference type="PDB" id="3FGT">
    <property type="method" value="X-ray"/>
    <property type="resolution" value="2.40 A"/>
    <property type="chains" value="A=47-248, B=249-594"/>
</dbReference>
<dbReference type="PDB" id="3FGW">
    <property type="method" value="X-ray"/>
    <property type="resolution" value="2.80 A"/>
    <property type="chains" value="A=47-594"/>
</dbReference>
<dbReference type="PDBsum" id="3FBX"/>
<dbReference type="PDBsum" id="3FGR"/>
<dbReference type="PDBsum" id="3FGT"/>
<dbReference type="PDBsum" id="3FGW"/>
<dbReference type="SMR" id="Q3TCN2"/>
<dbReference type="BioGRID" id="214915">
    <property type="interactions" value="3"/>
</dbReference>
<dbReference type="FunCoup" id="Q3TCN2">
    <property type="interactions" value="425"/>
</dbReference>
<dbReference type="IntAct" id="Q3TCN2">
    <property type="interactions" value="1"/>
</dbReference>
<dbReference type="MINT" id="Q3TCN2"/>
<dbReference type="STRING" id="10090.ENSMUSP00000031597"/>
<dbReference type="MEROPS" id="C95.001"/>
<dbReference type="GlyConnect" id="2661">
    <property type="glycosylation" value="4 N-Linked glycans (2 sites)"/>
</dbReference>
<dbReference type="GlyCosmos" id="Q3TCN2">
    <property type="glycosylation" value="5 sites, 4 glycans"/>
</dbReference>
<dbReference type="GlyGen" id="Q3TCN2">
    <property type="glycosylation" value="10 sites, 5 N-linked glycans (2 sites)"/>
</dbReference>
<dbReference type="iPTMnet" id="Q3TCN2"/>
<dbReference type="PhosphoSitePlus" id="Q3TCN2"/>
<dbReference type="SwissPalm" id="Q3TCN2"/>
<dbReference type="jPOST" id="Q3TCN2"/>
<dbReference type="PaxDb" id="10090-ENSMUSP00000031597"/>
<dbReference type="PeptideAtlas" id="Q3TCN2"/>
<dbReference type="ProteomicsDB" id="289443">
    <molecule id="Q3TCN2-1"/>
</dbReference>
<dbReference type="ProteomicsDB" id="289444">
    <molecule id="Q3TCN2-2"/>
</dbReference>
<dbReference type="Pumba" id="Q3TCN2"/>
<dbReference type="Antibodypedia" id="2539">
    <property type="antibodies" value="96 antibodies from 19 providers"/>
</dbReference>
<dbReference type="DNASU" id="71772"/>
<dbReference type="Ensembl" id="ENSMUST00000031597.7">
    <molecule id="Q3TCN2-1"/>
    <property type="protein sequence ID" value="ENSMUSP00000031597.7"/>
    <property type="gene ID" value="ENSMUSG00000029598.13"/>
</dbReference>
<dbReference type="GeneID" id="71772"/>
<dbReference type="KEGG" id="mmu:71772"/>
<dbReference type="UCSC" id="uc008zhh.2">
    <molecule id="Q3TCN2-1"/>
    <property type="organism name" value="mouse"/>
</dbReference>
<dbReference type="UCSC" id="uc008zhi.2">
    <molecule id="Q3TCN2-2"/>
    <property type="organism name" value="mouse"/>
</dbReference>
<dbReference type="AGR" id="MGI:1919022"/>
<dbReference type="CTD" id="196463"/>
<dbReference type="MGI" id="MGI:1919022">
    <property type="gene designation" value="Plbd2"/>
</dbReference>
<dbReference type="VEuPathDB" id="HostDB:ENSMUSG00000029598"/>
<dbReference type="eggNOG" id="KOG3774">
    <property type="taxonomic scope" value="Eukaryota"/>
</dbReference>
<dbReference type="GeneTree" id="ENSGT00530000063509"/>
<dbReference type="HOGENOM" id="CLU_027106_4_0_1"/>
<dbReference type="InParanoid" id="Q3TCN2"/>
<dbReference type="OMA" id="YQEGYWA"/>
<dbReference type="OrthoDB" id="443524at2759"/>
<dbReference type="PhylomeDB" id="Q3TCN2"/>
<dbReference type="TreeFam" id="TF315042"/>
<dbReference type="BioGRID-ORCS" id="71772">
    <property type="hits" value="3 hits in 78 CRISPR screens"/>
</dbReference>
<dbReference type="ChiTaRS" id="Plbd2">
    <property type="organism name" value="mouse"/>
</dbReference>
<dbReference type="EvolutionaryTrace" id="Q3TCN2"/>
<dbReference type="PRO" id="PR:Q3TCN2"/>
<dbReference type="Proteomes" id="UP000000589">
    <property type="component" value="Chromosome 5"/>
</dbReference>
<dbReference type="RNAct" id="Q3TCN2">
    <property type="molecule type" value="protein"/>
</dbReference>
<dbReference type="Bgee" id="ENSMUSG00000029598">
    <property type="expression patterns" value="Expressed in right kidney and 206 other cell types or tissues"/>
</dbReference>
<dbReference type="GO" id="GO:0043202">
    <property type="term" value="C:lysosomal lumen"/>
    <property type="evidence" value="ECO:0007669"/>
    <property type="project" value="UniProtKB-SubCell"/>
</dbReference>
<dbReference type="GO" id="GO:0005764">
    <property type="term" value="C:lysosome"/>
    <property type="evidence" value="ECO:0000314"/>
    <property type="project" value="MGI"/>
</dbReference>
<dbReference type="GO" id="GO:0004620">
    <property type="term" value="F:phospholipase activity"/>
    <property type="evidence" value="ECO:0007669"/>
    <property type="project" value="InterPro"/>
</dbReference>
<dbReference type="GO" id="GO:0016042">
    <property type="term" value="P:lipid catabolic process"/>
    <property type="evidence" value="ECO:0007669"/>
    <property type="project" value="UniProtKB-KW"/>
</dbReference>
<dbReference type="Gene3D" id="3.60.60.20">
    <property type="match status" value="1"/>
</dbReference>
<dbReference type="Gene3D" id="2.10.70.60">
    <property type="entry name" value="Phospholipase B-like, domain 1"/>
    <property type="match status" value="1"/>
</dbReference>
<dbReference type="Gene3D" id="1.10.439.20">
    <property type="entry name" value="Phospholipase B-like, domain 2"/>
    <property type="match status" value="1"/>
</dbReference>
<dbReference type="InterPro" id="IPR007000">
    <property type="entry name" value="PLipase_B-like"/>
</dbReference>
<dbReference type="InterPro" id="IPR043040">
    <property type="entry name" value="PLipase_B-like_dom1"/>
</dbReference>
<dbReference type="InterPro" id="IPR043041">
    <property type="entry name" value="PLipase_B-like_dom2"/>
</dbReference>
<dbReference type="InterPro" id="IPR043042">
    <property type="entry name" value="PLipase_B-like_dom3"/>
</dbReference>
<dbReference type="PANTHER" id="PTHR12370:SF3">
    <property type="entry name" value="PHOSPHOLIPASE B-LIKE 2-RELATED"/>
    <property type="match status" value="1"/>
</dbReference>
<dbReference type="PANTHER" id="PTHR12370">
    <property type="entry name" value="PHOSPHOLIPASE B-RELATED"/>
    <property type="match status" value="1"/>
</dbReference>
<dbReference type="Pfam" id="PF04916">
    <property type="entry name" value="Phospholip_B"/>
    <property type="match status" value="1"/>
</dbReference>
<proteinExistence type="evidence at protein level"/>
<protein>
    <recommendedName>
        <fullName>Putative phospholipase B-like 2</fullName>
        <ecNumber>3.1.1.-</ecNumber>
    </recommendedName>
    <alternativeName>
        <fullName>66.3 kDa protein</fullName>
    </alternativeName>
    <alternativeName>
        <fullName>76 kDa protein</fullName>
        <shortName>p76</shortName>
    </alternativeName>
    <alternativeName>
        <fullName>LAMA-like protein 2</fullName>
    </alternativeName>
    <alternativeName>
        <fullName>Lamina ancestor homolog 2</fullName>
    </alternativeName>
    <alternativeName>
        <fullName>Phospholipase B domain-containing protein 2</fullName>
    </alternativeName>
    <component>
        <recommendedName>
            <fullName>Putative phospholipase B-like 2 28 kDa form</fullName>
        </recommendedName>
    </component>
    <component>
        <recommendedName>
            <fullName>Putative phospholipase B-like 2 40 kDa form</fullName>
        </recommendedName>
    </component>
    <component>
        <recommendedName>
            <fullName>Putative phospholipase B-like 2 15 kDa form</fullName>
        </recommendedName>
    </component>
</protein>
<evidence type="ECO:0000250" key="1"/>
<evidence type="ECO:0000269" key="2">
    <source>
    </source>
</evidence>
<evidence type="ECO:0000269" key="3">
    <source>
    </source>
</evidence>
<evidence type="ECO:0000269" key="4">
    <source>
    </source>
</evidence>
<evidence type="ECO:0000303" key="5">
    <source>
    </source>
</evidence>
<evidence type="ECO:0000305" key="6"/>
<evidence type="ECO:0007829" key="7">
    <source>
        <dbReference type="PDB" id="3FGR"/>
    </source>
</evidence>
<comment type="function">
    <text evidence="1">Putative phospholipase.</text>
</comment>
<comment type="subunit">
    <text evidence="1">Interacts with IGF2R.</text>
</comment>
<comment type="subcellular location">
    <subcellularLocation>
        <location evidence="2 3">Lysosome lumen</location>
    </subcellularLocation>
</comment>
<comment type="alternative products">
    <event type="alternative splicing"/>
    <isoform>
        <id>Q3TCN2-1</id>
        <name>1</name>
        <sequence type="displayed"/>
    </isoform>
    <isoform>
        <id>Q3TCN2-2</id>
        <name>2</name>
        <sequence type="described" ref="VSP_024998 VSP_024999"/>
    </isoform>
</comment>
<comment type="tissue specificity">
    <text evidence="2">Present at highest levels in spleen, lung and brain (at protein level).</text>
</comment>
<comment type="PTM">
    <text>The p76 protein is synthesized as a 76 kDa precursor which is then processed into a N-terminal 28 kDa form and a C-terminal 40 kDa form. The C-terminal peptide is further processed into a 15 kDa form.</text>
</comment>
<comment type="PTM">
    <text evidence="1">Glycosylated; contains mannose 6-phosphate sugars.</text>
</comment>
<comment type="similarity">
    <text evidence="6">Belongs to the phospholipase B-like family.</text>
</comment>
<comment type="sequence caution" evidence="6">
    <conflict type="erroneous initiation">
        <sequence resource="EMBL-CDS" id="AAH26395"/>
    </conflict>
</comment>
<feature type="signal peptide">
    <location>
        <begin position="1"/>
        <end position="46"/>
    </location>
</feature>
<feature type="chain" id="PRO_0000286111" description="Putative phospholipase B-like 2">
    <location>
        <begin position="47"/>
        <end position="594"/>
    </location>
</feature>
<feature type="chain" id="PRO_0000314076" description="Putative phospholipase B-like 2 28 kDa form">
    <location>
        <begin position="47"/>
        <end position="248"/>
    </location>
</feature>
<feature type="chain" id="PRO_0000314077" description="Putative phospholipase B-like 2 40 kDa form">
    <location>
        <begin position="249"/>
        <end position="594"/>
    </location>
</feature>
<feature type="chain" id="PRO_0000314078" description="Putative phospholipase B-like 2 15 kDa form">
    <location>
        <begin position="514"/>
        <end position="594"/>
    </location>
</feature>
<feature type="glycosylation site" description="N-linked (GlcNAc...) asparagine" evidence="2">
    <location>
        <position position="93"/>
    </location>
</feature>
<feature type="glycosylation site" description="N-linked (GlcNAc...) asparagine" evidence="2 4">
    <location>
        <position position="115"/>
    </location>
</feature>
<feature type="glycosylation site" description="N-linked (GlcNAc...) asparagine" evidence="2 4">
    <location>
        <position position="236"/>
    </location>
</feature>
<feature type="glycosylation site" description="N-linked (GlcNAc...) asparagine" evidence="2 4">
    <location>
        <position position="441"/>
    </location>
</feature>
<feature type="glycosylation site" description="N-linked (GlcNAc...) asparagine" evidence="2 4">
    <location>
        <position position="520"/>
    </location>
</feature>
<feature type="disulfide bond" evidence="4">
    <location>
        <begin position="147"/>
        <end position="157"/>
    </location>
</feature>
<feature type="disulfide bond" evidence="4">
    <location>
        <begin position="497"/>
        <end position="500"/>
    </location>
</feature>
<feature type="splice variant" id="VSP_024998" description="In isoform 2." evidence="5">
    <original>FETVFNASGLQALVAQ</original>
    <variation>VALFFHVAPSPQVCPP</variation>
    <location>
        <begin position="436"/>
        <end position="451"/>
    </location>
</feature>
<feature type="splice variant" id="VSP_024999" description="In isoform 2." evidence="5">
    <location>
        <begin position="452"/>
        <end position="594"/>
    </location>
</feature>
<feature type="sequence conflict" description="In Ref. 2; BAC28089." evidence="6" ref="2">
    <original>A</original>
    <variation>S</variation>
    <location>
        <position position="22"/>
    </location>
</feature>
<feature type="sequence conflict" description="In Ref. 2; BAC28089." evidence="6" ref="2">
    <original>W</original>
    <variation>L</variation>
    <location>
        <position position="91"/>
    </location>
</feature>
<feature type="sequence conflict" description="In Ref. 2; BAE41761." evidence="6" ref="2">
    <original>D</original>
    <variation>G</variation>
    <location>
        <position position="107"/>
    </location>
</feature>
<feature type="sequence conflict" description="In Ref. 2; BAB23709." evidence="6" ref="2">
    <original>R</original>
    <variation>M</variation>
    <location>
        <position position="173"/>
    </location>
</feature>
<feature type="sequence conflict" description="In Ref. 2; BAB23709." evidence="6" ref="2">
    <original>Q</original>
    <variation>H</variation>
    <location>
        <position position="223"/>
    </location>
</feature>
<feature type="sequence conflict" description="In Ref. 2; BAB23709." evidence="6" ref="2">
    <original>D</original>
    <variation>Y</variation>
    <location>
        <position position="227"/>
    </location>
</feature>
<feature type="sequence conflict" description="In Ref. 2; BAB23709." evidence="6" ref="2">
    <original>D</original>
    <variation>N</variation>
    <location>
        <position position="230"/>
    </location>
</feature>
<feature type="sequence conflict" description="In Ref. 2; BAB23709." evidence="6" ref="2">
    <original>E</original>
    <variation>K</variation>
    <location>
        <position position="232"/>
    </location>
</feature>
<feature type="sequence conflict" description="In Ref. 2; BAB23709." evidence="6" ref="2">
    <original>D</original>
    <variation>N</variation>
    <location>
        <position position="315"/>
    </location>
</feature>
<feature type="sequence conflict" description="In Ref. 2; BAE37687." evidence="6" ref="2">
    <original>V</original>
    <variation>E</variation>
    <location>
        <position position="348"/>
    </location>
</feature>
<feature type="sequence conflict" description="In Ref. 1; AAG44101." evidence="6" ref="1">
    <original>N</original>
    <variation>S</variation>
    <location>
        <position position="381"/>
    </location>
</feature>
<feature type="sequence conflict" description="In Ref. 2; BAE41924." evidence="6" ref="2">
    <original>A</original>
    <variation>T</variation>
    <location>
        <position position="553"/>
    </location>
</feature>
<feature type="strand" evidence="7">
    <location>
        <begin position="64"/>
        <end position="72"/>
    </location>
</feature>
<feature type="turn" evidence="7">
    <location>
        <begin position="73"/>
        <end position="76"/>
    </location>
</feature>
<feature type="strand" evidence="7">
    <location>
        <begin position="77"/>
        <end position="83"/>
    </location>
</feature>
<feature type="strand" evidence="7">
    <location>
        <begin position="88"/>
        <end position="96"/>
    </location>
</feature>
<feature type="helix" evidence="7">
    <location>
        <begin position="98"/>
        <end position="101"/>
    </location>
</feature>
<feature type="strand" evidence="7">
    <location>
        <begin position="104"/>
        <end position="110"/>
    </location>
</feature>
<feature type="helix" evidence="7">
    <location>
        <begin position="116"/>
        <end position="142"/>
    </location>
</feature>
<feature type="turn" evidence="7">
    <location>
        <begin position="143"/>
        <end position="147"/>
    </location>
</feature>
<feature type="helix" evidence="7">
    <location>
        <begin position="154"/>
        <end position="177"/>
    </location>
</feature>
<feature type="helix" evidence="7">
    <location>
        <begin position="182"/>
        <end position="202"/>
    </location>
</feature>
<feature type="turn" evidence="7">
    <location>
        <begin position="216"/>
        <end position="219"/>
    </location>
</feature>
<feature type="helix" evidence="7">
    <location>
        <begin position="220"/>
        <end position="223"/>
    </location>
</feature>
<feature type="helix" evidence="7">
    <location>
        <begin position="225"/>
        <end position="234"/>
    </location>
</feature>
<feature type="strand" evidence="7">
    <location>
        <begin position="250"/>
        <end position="255"/>
    </location>
</feature>
<feature type="helix" evidence="7">
    <location>
        <begin position="257"/>
        <end position="259"/>
    </location>
</feature>
<feature type="strand" evidence="7">
    <location>
        <begin position="262"/>
        <end position="267"/>
    </location>
</feature>
<feature type="strand" evidence="7">
    <location>
        <begin position="269"/>
        <end position="271"/>
    </location>
</feature>
<feature type="helix" evidence="7">
    <location>
        <begin position="272"/>
        <end position="274"/>
    </location>
</feature>
<feature type="strand" evidence="7">
    <location>
        <begin position="278"/>
        <end position="283"/>
    </location>
</feature>
<feature type="strand" evidence="7">
    <location>
        <begin position="287"/>
        <end position="291"/>
    </location>
</feature>
<feature type="strand" evidence="7">
    <location>
        <begin position="300"/>
        <end position="306"/>
    </location>
</feature>
<feature type="strand" evidence="7">
    <location>
        <begin position="317"/>
        <end position="320"/>
    </location>
</feature>
<feature type="strand" evidence="7">
    <location>
        <begin position="323"/>
        <end position="330"/>
    </location>
</feature>
<feature type="helix" evidence="7">
    <location>
        <begin position="336"/>
        <end position="341"/>
    </location>
</feature>
<feature type="strand" evidence="7">
    <location>
        <begin position="344"/>
        <end position="346"/>
    </location>
</feature>
<feature type="helix" evidence="7">
    <location>
        <begin position="350"/>
        <end position="360"/>
    </location>
</feature>
<feature type="helix" evidence="7">
    <location>
        <begin position="364"/>
        <end position="371"/>
    </location>
</feature>
<feature type="turn" evidence="7">
    <location>
        <begin position="372"/>
        <end position="374"/>
    </location>
</feature>
<feature type="strand" evidence="7">
    <location>
        <begin position="381"/>
        <end position="387"/>
    </location>
</feature>
<feature type="helix" evidence="7">
    <location>
        <begin position="388"/>
        <end position="390"/>
    </location>
</feature>
<feature type="strand" evidence="7">
    <location>
        <begin position="399"/>
        <end position="409"/>
    </location>
</feature>
<feature type="strand" evidence="7">
    <location>
        <begin position="412"/>
        <end position="417"/>
    </location>
</feature>
<feature type="helix" evidence="7">
    <location>
        <begin position="419"/>
        <end position="425"/>
    </location>
</feature>
<feature type="strand" evidence="7">
    <location>
        <begin position="426"/>
        <end position="430"/>
    </location>
</feature>
<feature type="helix" evidence="7">
    <location>
        <begin position="437"/>
        <end position="442"/>
    </location>
</feature>
<feature type="helix" evidence="7">
    <location>
        <begin position="445"/>
        <end position="452"/>
    </location>
</feature>
<feature type="helix" evidence="7">
    <location>
        <begin position="454"/>
        <end position="456"/>
    </location>
</feature>
<feature type="turn" evidence="7">
    <location>
        <begin position="458"/>
        <end position="460"/>
    </location>
</feature>
<feature type="helix" evidence="7">
    <location>
        <begin position="462"/>
        <end position="470"/>
    </location>
</feature>
<feature type="helix" evidence="7">
    <location>
        <begin position="471"/>
        <end position="473"/>
    </location>
</feature>
<feature type="helix" evidence="7">
    <location>
        <begin position="477"/>
        <end position="484"/>
    </location>
</feature>
<feature type="turn" evidence="7">
    <location>
        <begin position="489"/>
        <end position="491"/>
    </location>
</feature>
<feature type="helix" evidence="7">
    <location>
        <begin position="493"/>
        <end position="495"/>
    </location>
</feature>
<feature type="strand" evidence="7">
    <location>
        <begin position="500"/>
        <end position="504"/>
    </location>
</feature>
<feature type="strand" evidence="7">
    <location>
        <begin position="508"/>
        <end position="511"/>
    </location>
</feature>
<feature type="helix" evidence="7">
    <location>
        <begin position="514"/>
        <end position="516"/>
    </location>
</feature>
<feature type="helix" evidence="7">
    <location>
        <begin position="526"/>
        <end position="528"/>
    </location>
</feature>
<feature type="strand" evidence="7">
    <location>
        <begin position="532"/>
        <end position="535"/>
    </location>
</feature>
<feature type="strand" evidence="7">
    <location>
        <begin position="537"/>
        <end position="541"/>
    </location>
</feature>
<feature type="helix" evidence="7">
    <location>
        <begin position="543"/>
        <end position="547"/>
    </location>
</feature>
<feature type="strand" evidence="7">
    <location>
        <begin position="551"/>
        <end position="557"/>
    </location>
</feature>
<feature type="strand" evidence="7">
    <location>
        <begin position="560"/>
        <end position="562"/>
    </location>
</feature>
<feature type="helix" evidence="7">
    <location>
        <begin position="567"/>
        <end position="569"/>
    </location>
</feature>
<feature type="turn" evidence="7">
    <location>
        <begin position="571"/>
        <end position="574"/>
    </location>
</feature>
<feature type="strand" evidence="7">
    <location>
        <begin position="582"/>
        <end position="584"/>
    </location>
</feature>
<feature type="strand" evidence="7">
    <location>
        <begin position="589"/>
        <end position="591"/>
    </location>
</feature>